<gene>
    <name evidence="1" type="primary">hisH</name>
    <name type="ordered locus">BB4857</name>
</gene>
<comment type="function">
    <text evidence="1">IGPS catalyzes the conversion of PRFAR and glutamine to IGP, AICAR and glutamate. The HisH subunit catalyzes the hydrolysis of glutamine to glutamate and ammonia as part of the synthesis of IGP and AICAR. The resulting ammonia molecule is channeled to the active site of HisF.</text>
</comment>
<comment type="catalytic activity">
    <reaction evidence="1">
        <text>5-[(5-phospho-1-deoxy-D-ribulos-1-ylimino)methylamino]-1-(5-phospho-beta-D-ribosyl)imidazole-4-carboxamide + L-glutamine = D-erythro-1-(imidazol-4-yl)glycerol 3-phosphate + 5-amino-1-(5-phospho-beta-D-ribosyl)imidazole-4-carboxamide + L-glutamate + H(+)</text>
        <dbReference type="Rhea" id="RHEA:24793"/>
        <dbReference type="ChEBI" id="CHEBI:15378"/>
        <dbReference type="ChEBI" id="CHEBI:29985"/>
        <dbReference type="ChEBI" id="CHEBI:58278"/>
        <dbReference type="ChEBI" id="CHEBI:58359"/>
        <dbReference type="ChEBI" id="CHEBI:58475"/>
        <dbReference type="ChEBI" id="CHEBI:58525"/>
        <dbReference type="EC" id="4.3.2.10"/>
    </reaction>
</comment>
<comment type="catalytic activity">
    <reaction evidence="1">
        <text>L-glutamine + H2O = L-glutamate + NH4(+)</text>
        <dbReference type="Rhea" id="RHEA:15889"/>
        <dbReference type="ChEBI" id="CHEBI:15377"/>
        <dbReference type="ChEBI" id="CHEBI:28938"/>
        <dbReference type="ChEBI" id="CHEBI:29985"/>
        <dbReference type="ChEBI" id="CHEBI:58359"/>
        <dbReference type="EC" id="3.5.1.2"/>
    </reaction>
</comment>
<comment type="pathway">
    <text evidence="1">Amino-acid biosynthesis; L-histidine biosynthesis; L-histidine from 5-phospho-alpha-D-ribose 1-diphosphate: step 5/9.</text>
</comment>
<comment type="subunit">
    <text evidence="1">Heterodimer of HisH and HisF.</text>
</comment>
<comment type="subcellular location">
    <subcellularLocation>
        <location evidence="1">Cytoplasm</location>
    </subcellularLocation>
</comment>
<reference key="1">
    <citation type="journal article" date="2003" name="Nat. Genet.">
        <title>Comparative analysis of the genome sequences of Bordetella pertussis, Bordetella parapertussis and Bordetella bronchiseptica.</title>
        <authorList>
            <person name="Parkhill J."/>
            <person name="Sebaihia M."/>
            <person name="Preston A."/>
            <person name="Murphy L.D."/>
            <person name="Thomson N.R."/>
            <person name="Harris D.E."/>
            <person name="Holden M.T.G."/>
            <person name="Churcher C.M."/>
            <person name="Bentley S.D."/>
            <person name="Mungall K.L."/>
            <person name="Cerdeno-Tarraga A.-M."/>
            <person name="Temple L."/>
            <person name="James K.D."/>
            <person name="Harris B."/>
            <person name="Quail M.A."/>
            <person name="Achtman M."/>
            <person name="Atkin R."/>
            <person name="Baker S."/>
            <person name="Basham D."/>
            <person name="Bason N."/>
            <person name="Cherevach I."/>
            <person name="Chillingworth T."/>
            <person name="Collins M."/>
            <person name="Cronin A."/>
            <person name="Davis P."/>
            <person name="Doggett J."/>
            <person name="Feltwell T."/>
            <person name="Goble A."/>
            <person name="Hamlin N."/>
            <person name="Hauser H."/>
            <person name="Holroyd S."/>
            <person name="Jagels K."/>
            <person name="Leather S."/>
            <person name="Moule S."/>
            <person name="Norberczak H."/>
            <person name="O'Neil S."/>
            <person name="Ormond D."/>
            <person name="Price C."/>
            <person name="Rabbinowitsch E."/>
            <person name="Rutter S."/>
            <person name="Sanders M."/>
            <person name="Saunders D."/>
            <person name="Seeger K."/>
            <person name="Sharp S."/>
            <person name="Simmonds M."/>
            <person name="Skelton J."/>
            <person name="Squares R."/>
            <person name="Squares S."/>
            <person name="Stevens K."/>
            <person name="Unwin L."/>
            <person name="Whitehead S."/>
            <person name="Barrell B.G."/>
            <person name="Maskell D.J."/>
        </authorList>
    </citation>
    <scope>NUCLEOTIDE SEQUENCE [LARGE SCALE GENOMIC DNA]</scope>
    <source>
        <strain>ATCC BAA-588 / NCTC 13252 / RB50</strain>
    </source>
</reference>
<organism>
    <name type="scientific">Bordetella bronchiseptica (strain ATCC BAA-588 / NCTC 13252 / RB50)</name>
    <name type="common">Alcaligenes bronchisepticus</name>
    <dbReference type="NCBI Taxonomy" id="257310"/>
    <lineage>
        <taxon>Bacteria</taxon>
        <taxon>Pseudomonadati</taxon>
        <taxon>Pseudomonadota</taxon>
        <taxon>Betaproteobacteria</taxon>
        <taxon>Burkholderiales</taxon>
        <taxon>Alcaligenaceae</taxon>
        <taxon>Bordetella</taxon>
    </lineage>
</organism>
<sequence>MSTIAIVDYGMGNFHSVARALQHAAPDADIRICNRPEQIDAADRVVFPGQGAMPDCMRTLNESGLRAAVERAAASKPLMGVCVGEQMLFERSEEGDTPCLGIFPGEVRRFAGPQFADPVAADQAAAAPPAAARERLKVPHMGWNQVRQTRSHALWEGIPDGTHFYFVHSYYAAPSDPALTTGVTDYGVAFTCAVAAANIFAVQFHPEKSAEHGLRLYRNFVDWQP</sequence>
<proteinExistence type="inferred from homology"/>
<keyword id="KW-0028">Amino-acid biosynthesis</keyword>
<keyword id="KW-0963">Cytoplasm</keyword>
<keyword id="KW-0315">Glutamine amidotransferase</keyword>
<keyword id="KW-0368">Histidine biosynthesis</keyword>
<keyword id="KW-0378">Hydrolase</keyword>
<keyword id="KW-0456">Lyase</keyword>
<accession>Q7WDY1</accession>
<evidence type="ECO:0000255" key="1">
    <source>
        <dbReference type="HAMAP-Rule" id="MF_00278"/>
    </source>
</evidence>
<dbReference type="EC" id="4.3.2.10" evidence="1"/>
<dbReference type="EC" id="3.5.1.2" evidence="1"/>
<dbReference type="EMBL" id="BX640451">
    <property type="protein sequence ID" value="CAE35220.1"/>
    <property type="molecule type" value="Genomic_DNA"/>
</dbReference>
<dbReference type="RefSeq" id="WP_003815798.1">
    <property type="nucleotide sequence ID" value="NC_002927.3"/>
</dbReference>
<dbReference type="SMR" id="Q7WDY1"/>
<dbReference type="GeneID" id="93206067"/>
<dbReference type="KEGG" id="bbr:BB4857"/>
<dbReference type="eggNOG" id="COG0118">
    <property type="taxonomic scope" value="Bacteria"/>
</dbReference>
<dbReference type="HOGENOM" id="CLU_071837_2_0_4"/>
<dbReference type="UniPathway" id="UPA00031">
    <property type="reaction ID" value="UER00010"/>
</dbReference>
<dbReference type="Proteomes" id="UP000001027">
    <property type="component" value="Chromosome"/>
</dbReference>
<dbReference type="GO" id="GO:0005737">
    <property type="term" value="C:cytoplasm"/>
    <property type="evidence" value="ECO:0007669"/>
    <property type="project" value="UniProtKB-SubCell"/>
</dbReference>
<dbReference type="GO" id="GO:0004359">
    <property type="term" value="F:glutaminase activity"/>
    <property type="evidence" value="ECO:0007669"/>
    <property type="project" value="UniProtKB-EC"/>
</dbReference>
<dbReference type="GO" id="GO:0000107">
    <property type="term" value="F:imidazoleglycerol-phosphate synthase activity"/>
    <property type="evidence" value="ECO:0007669"/>
    <property type="project" value="UniProtKB-UniRule"/>
</dbReference>
<dbReference type="GO" id="GO:0016829">
    <property type="term" value="F:lyase activity"/>
    <property type="evidence" value="ECO:0007669"/>
    <property type="project" value="UniProtKB-KW"/>
</dbReference>
<dbReference type="GO" id="GO:0000105">
    <property type="term" value="P:L-histidine biosynthetic process"/>
    <property type="evidence" value="ECO:0007669"/>
    <property type="project" value="UniProtKB-UniRule"/>
</dbReference>
<dbReference type="CDD" id="cd01748">
    <property type="entry name" value="GATase1_IGP_Synthase"/>
    <property type="match status" value="1"/>
</dbReference>
<dbReference type="Gene3D" id="3.40.50.880">
    <property type="match status" value="1"/>
</dbReference>
<dbReference type="HAMAP" id="MF_00278">
    <property type="entry name" value="HisH"/>
    <property type="match status" value="1"/>
</dbReference>
<dbReference type="InterPro" id="IPR029062">
    <property type="entry name" value="Class_I_gatase-like"/>
</dbReference>
<dbReference type="InterPro" id="IPR017926">
    <property type="entry name" value="GATASE"/>
</dbReference>
<dbReference type="InterPro" id="IPR010139">
    <property type="entry name" value="Imidazole-glycPsynth_HisH"/>
</dbReference>
<dbReference type="NCBIfam" id="TIGR01855">
    <property type="entry name" value="IMP_synth_hisH"/>
    <property type="match status" value="1"/>
</dbReference>
<dbReference type="PANTHER" id="PTHR42701">
    <property type="entry name" value="IMIDAZOLE GLYCEROL PHOSPHATE SYNTHASE SUBUNIT HISH"/>
    <property type="match status" value="1"/>
</dbReference>
<dbReference type="PANTHER" id="PTHR42701:SF2">
    <property type="entry name" value="IMIDAZOLE GLYCEROL PHOSPHATE SYNTHASE SUBUNIT HISH 1"/>
    <property type="match status" value="1"/>
</dbReference>
<dbReference type="Pfam" id="PF00117">
    <property type="entry name" value="GATase"/>
    <property type="match status" value="1"/>
</dbReference>
<dbReference type="PIRSF" id="PIRSF000495">
    <property type="entry name" value="Amidotransf_hisH"/>
    <property type="match status" value="1"/>
</dbReference>
<dbReference type="SUPFAM" id="SSF52317">
    <property type="entry name" value="Class I glutamine amidotransferase-like"/>
    <property type="match status" value="1"/>
</dbReference>
<dbReference type="PROSITE" id="PS51273">
    <property type="entry name" value="GATASE_TYPE_1"/>
    <property type="match status" value="1"/>
</dbReference>
<protein>
    <recommendedName>
        <fullName evidence="1">Imidazole glycerol phosphate synthase subunit HisH</fullName>
        <ecNumber evidence="1">4.3.2.10</ecNumber>
    </recommendedName>
    <alternativeName>
        <fullName evidence="1">IGP synthase glutaminase subunit</fullName>
        <ecNumber evidence="1">3.5.1.2</ecNumber>
    </alternativeName>
    <alternativeName>
        <fullName evidence="1">IGP synthase subunit HisH</fullName>
    </alternativeName>
    <alternativeName>
        <fullName evidence="1">ImGP synthase subunit HisH</fullName>
        <shortName evidence="1">IGPS subunit HisH</shortName>
    </alternativeName>
</protein>
<feature type="chain" id="PRO_0000152348" description="Imidazole glycerol phosphate synthase subunit HisH">
    <location>
        <begin position="1"/>
        <end position="225"/>
    </location>
</feature>
<feature type="domain" description="Glutamine amidotransferase type-1" evidence="1">
    <location>
        <begin position="3"/>
        <end position="225"/>
    </location>
</feature>
<feature type="active site" description="Nucleophile" evidence="1">
    <location>
        <position position="82"/>
    </location>
</feature>
<feature type="active site" evidence="1">
    <location>
        <position position="205"/>
    </location>
</feature>
<feature type="active site" evidence="1">
    <location>
        <position position="207"/>
    </location>
</feature>
<name>HIS5_BORBR</name>